<sequence length="154" mass="17188">MGLSDGEWQLVLNVWGKVEADLAGHGQDVLIRLFKGHPETLEKFDKFKHLKTEADMKASEDLKKHGNTVLTALGAILKKKGHHDAELKPLAQSHATKHKIPIKYLEFISEAIIHVLHSRHPAEFGADAQGAMNKALELFRKDIAAKYKELGFHG</sequence>
<proteinExistence type="evidence at protein level"/>
<gene>
    <name type="primary">MB</name>
</gene>
<keyword id="KW-0963">Cytoplasm</keyword>
<keyword id="KW-0903">Direct protein sequencing</keyword>
<keyword id="KW-0349">Heme</keyword>
<keyword id="KW-0408">Iron</keyword>
<keyword id="KW-0479">Metal-binding</keyword>
<keyword id="KW-0514">Muscle protein</keyword>
<keyword id="KW-0560">Oxidoreductase</keyword>
<keyword id="KW-0561">Oxygen transport</keyword>
<keyword id="KW-0597">Phosphoprotein</keyword>
<keyword id="KW-1185">Reference proteome</keyword>
<keyword id="KW-0813">Transport</keyword>
<comment type="function">
    <text evidence="1">Monomeric heme protein which primary function is to store oxygen and facilitate its diffusion within muscle tissues. Reversibly binds oxygen through a pentacoordinated heme iron and enables its timely and efficient release as needed during periods of heightened demand. Depending on the oxidative conditions of tissues and cells, and in addition to its ability to bind oxygen, it also has a nitrite reductase activity whereby it regulates the production of bioactive nitric oxide. Under stress conditions, like hypoxia and anoxia, it also protects cells against reactive oxygen species thanks to its pseudoperoxidase activity.</text>
</comment>
<comment type="catalytic activity">
    <reaction evidence="1">
        <text>Fe(III)-heme b-[protein] + nitric oxide + H2O = Fe(II)-heme b-[protein] + nitrite + 2 H(+)</text>
        <dbReference type="Rhea" id="RHEA:77711"/>
        <dbReference type="Rhea" id="RHEA-COMP:18975"/>
        <dbReference type="Rhea" id="RHEA-COMP:18976"/>
        <dbReference type="ChEBI" id="CHEBI:15377"/>
        <dbReference type="ChEBI" id="CHEBI:15378"/>
        <dbReference type="ChEBI" id="CHEBI:16301"/>
        <dbReference type="ChEBI" id="CHEBI:16480"/>
        <dbReference type="ChEBI" id="CHEBI:55376"/>
        <dbReference type="ChEBI" id="CHEBI:60344"/>
    </reaction>
    <physiologicalReaction direction="right-to-left" evidence="1">
        <dbReference type="Rhea" id="RHEA:77713"/>
    </physiologicalReaction>
</comment>
<comment type="catalytic activity">
    <reaction evidence="1">
        <text>H2O2 + AH2 = A + 2 H2O</text>
        <dbReference type="Rhea" id="RHEA:30275"/>
        <dbReference type="ChEBI" id="CHEBI:13193"/>
        <dbReference type="ChEBI" id="CHEBI:15377"/>
        <dbReference type="ChEBI" id="CHEBI:16240"/>
        <dbReference type="ChEBI" id="CHEBI:17499"/>
    </reaction>
</comment>
<comment type="subunit">
    <text evidence="2">Monomeric.</text>
</comment>
<comment type="subcellular location">
    <subcellularLocation>
        <location evidence="1">Cytoplasm</location>
        <location evidence="1">Sarcoplasm</location>
    </subcellularLocation>
</comment>
<comment type="similarity">
    <text evidence="7">Belongs to the globin family.</text>
</comment>
<feature type="initiator methionine" description="Removed" evidence="8">
    <location>
        <position position="1"/>
    </location>
</feature>
<feature type="chain" id="PRO_0000053348" description="Myoglobin">
    <location>
        <begin position="2"/>
        <end position="154"/>
    </location>
</feature>
<feature type="domain" description="Globin" evidence="7">
    <location>
        <begin position="2"/>
        <end position="148"/>
    </location>
</feature>
<feature type="binding site" evidence="5">
    <location>
        <position position="65"/>
    </location>
    <ligand>
        <name>nitrite</name>
        <dbReference type="ChEBI" id="CHEBI:16301"/>
    </ligand>
</feature>
<feature type="binding site" evidence="3 7">
    <location>
        <position position="65"/>
    </location>
    <ligand>
        <name>O2</name>
        <dbReference type="ChEBI" id="CHEBI:15379"/>
    </ligand>
</feature>
<feature type="binding site" description="proximal binding residue" evidence="1">
    <location>
        <position position="94"/>
    </location>
    <ligand>
        <name>heme b</name>
        <dbReference type="ChEBI" id="CHEBI:60344"/>
    </ligand>
    <ligandPart>
        <name>Fe</name>
        <dbReference type="ChEBI" id="CHEBI:18248"/>
    </ligandPart>
</feature>
<feature type="modified residue" description="Phosphoserine" evidence="6">
    <location>
        <position position="4"/>
    </location>
</feature>
<feature type="modified residue" description="Phosphothreonine" evidence="4">
    <location>
        <position position="68"/>
    </location>
</feature>
<evidence type="ECO:0000250" key="1">
    <source>
        <dbReference type="UniProtKB" id="P02144"/>
    </source>
</evidence>
<evidence type="ECO:0000250" key="2">
    <source>
        <dbReference type="UniProtKB" id="P02185"/>
    </source>
</evidence>
<evidence type="ECO:0000250" key="3">
    <source>
        <dbReference type="UniProtKB" id="P02189"/>
    </source>
</evidence>
<evidence type="ECO:0000250" key="4">
    <source>
        <dbReference type="UniProtKB" id="P04247"/>
    </source>
</evidence>
<evidence type="ECO:0000250" key="5">
    <source>
        <dbReference type="UniProtKB" id="P68082"/>
    </source>
</evidence>
<evidence type="ECO:0000250" key="6">
    <source>
        <dbReference type="UniProtKB" id="Q9QZ76"/>
    </source>
</evidence>
<evidence type="ECO:0000255" key="7">
    <source>
        <dbReference type="PROSITE-ProRule" id="PRU00238"/>
    </source>
</evidence>
<evidence type="ECO:0000269" key="8">
    <source>
    </source>
</evidence>
<organism>
    <name type="scientific">Tursiops truncatus</name>
    <name type="common">Atlantic bottle-nosed dolphin</name>
    <name type="synonym">Delphinus truncatus</name>
    <dbReference type="NCBI Taxonomy" id="9739"/>
    <lineage>
        <taxon>Eukaryota</taxon>
        <taxon>Metazoa</taxon>
        <taxon>Chordata</taxon>
        <taxon>Craniata</taxon>
        <taxon>Vertebrata</taxon>
        <taxon>Euteleostomi</taxon>
        <taxon>Mammalia</taxon>
        <taxon>Eutheria</taxon>
        <taxon>Laurasiatheria</taxon>
        <taxon>Artiodactyla</taxon>
        <taxon>Whippomorpha</taxon>
        <taxon>Cetacea</taxon>
        <taxon>Odontoceti</taxon>
        <taxon>Delphinidae</taxon>
        <taxon>Tursiops</taxon>
    </lineage>
</organism>
<reference key="1">
    <citation type="journal article" date="1976" name="Biochemistry">
        <title>Complete amino acid sequence of the myoglobin from the Atlantic bottlenosed dolphin, Tursiops truncatus.</title>
        <authorList>
            <person name="Jones B.N."/>
            <person name="Vigna R.A."/>
            <person name="Dwulet F.E."/>
            <person name="Bogardt R.A. Jr."/>
            <person name="Lehman L.D."/>
            <person name="Gurd F.R.N."/>
        </authorList>
    </citation>
    <scope>PROTEIN SEQUENCE OF 2-154</scope>
    <source>
        <tissue>Skeletal muscle</tissue>
    </source>
</reference>
<dbReference type="EC" id="1.7.-.-" evidence="1"/>
<dbReference type="EC" id="1.11.1.-" evidence="1"/>
<dbReference type="PIR" id="A02494">
    <property type="entry name" value="MYDD"/>
</dbReference>
<dbReference type="RefSeq" id="XP_019807675.1">
    <property type="nucleotide sequence ID" value="XM_019952116.1"/>
</dbReference>
<dbReference type="RefSeq" id="XP_033721510.1">
    <property type="nucleotide sequence ID" value="XM_033865619.1"/>
</dbReference>
<dbReference type="SMR" id="P68279"/>
<dbReference type="FunCoup" id="P68279">
    <property type="interactions" value="121"/>
</dbReference>
<dbReference type="STRING" id="9739.ENSTTRP00000006942"/>
<dbReference type="GeneID" id="101315962"/>
<dbReference type="HOGENOM" id="CLU_003827_18_0_1"/>
<dbReference type="InParanoid" id="P68279"/>
<dbReference type="OrthoDB" id="6344802at2759"/>
<dbReference type="TreeFam" id="TF332967"/>
<dbReference type="Proteomes" id="UP000245320">
    <property type="component" value="Chromosome 11"/>
</dbReference>
<dbReference type="GO" id="GO:0070062">
    <property type="term" value="C:extracellular exosome"/>
    <property type="evidence" value="ECO:0007669"/>
    <property type="project" value="TreeGrafter"/>
</dbReference>
<dbReference type="GO" id="GO:0016528">
    <property type="term" value="C:sarcoplasm"/>
    <property type="evidence" value="ECO:0000250"/>
    <property type="project" value="UniProtKB"/>
</dbReference>
<dbReference type="GO" id="GO:0020037">
    <property type="term" value="F:heme binding"/>
    <property type="evidence" value="ECO:0007669"/>
    <property type="project" value="InterPro"/>
</dbReference>
<dbReference type="GO" id="GO:0046872">
    <property type="term" value="F:metal ion binding"/>
    <property type="evidence" value="ECO:0007669"/>
    <property type="project" value="UniProtKB-KW"/>
</dbReference>
<dbReference type="GO" id="GO:0098809">
    <property type="term" value="F:nitrite reductase activity"/>
    <property type="evidence" value="ECO:0000250"/>
    <property type="project" value="UniProtKB"/>
</dbReference>
<dbReference type="GO" id="GO:0019825">
    <property type="term" value="F:oxygen binding"/>
    <property type="evidence" value="ECO:0007669"/>
    <property type="project" value="InterPro"/>
</dbReference>
<dbReference type="GO" id="GO:0005344">
    <property type="term" value="F:oxygen carrier activity"/>
    <property type="evidence" value="ECO:0000250"/>
    <property type="project" value="UniProtKB"/>
</dbReference>
<dbReference type="GO" id="GO:0004601">
    <property type="term" value="F:peroxidase activity"/>
    <property type="evidence" value="ECO:0000250"/>
    <property type="project" value="UniProtKB"/>
</dbReference>
<dbReference type="GO" id="GO:0019430">
    <property type="term" value="P:removal of superoxide radicals"/>
    <property type="evidence" value="ECO:0000250"/>
    <property type="project" value="UniProtKB"/>
</dbReference>
<dbReference type="CDD" id="cd08926">
    <property type="entry name" value="Mb"/>
    <property type="match status" value="1"/>
</dbReference>
<dbReference type="Gene3D" id="6.10.140.2100">
    <property type="match status" value="1"/>
</dbReference>
<dbReference type="Gene3D" id="6.10.140.2110">
    <property type="match status" value="1"/>
</dbReference>
<dbReference type="InterPro" id="IPR000971">
    <property type="entry name" value="Globin"/>
</dbReference>
<dbReference type="InterPro" id="IPR009050">
    <property type="entry name" value="Globin-like_sf"/>
</dbReference>
<dbReference type="InterPro" id="IPR002335">
    <property type="entry name" value="Myoglobin"/>
</dbReference>
<dbReference type="PANTHER" id="PTHR47132">
    <property type="entry name" value="MYOGLOBIN"/>
    <property type="match status" value="1"/>
</dbReference>
<dbReference type="PANTHER" id="PTHR47132:SF1">
    <property type="entry name" value="MYOGLOBIN"/>
    <property type="match status" value="1"/>
</dbReference>
<dbReference type="Pfam" id="PF00042">
    <property type="entry name" value="Globin"/>
    <property type="match status" value="1"/>
</dbReference>
<dbReference type="PRINTS" id="PR00613">
    <property type="entry name" value="MYOGLOBIN"/>
</dbReference>
<dbReference type="SUPFAM" id="SSF46458">
    <property type="entry name" value="Globin-like"/>
    <property type="match status" value="1"/>
</dbReference>
<dbReference type="PROSITE" id="PS01033">
    <property type="entry name" value="GLOBIN"/>
    <property type="match status" value="1"/>
</dbReference>
<name>MYG_TURTR</name>
<protein>
    <recommendedName>
        <fullName>Myoglobin</fullName>
    </recommendedName>
    <alternativeName>
        <fullName evidence="1">Nitrite reductase MB</fullName>
        <ecNumber evidence="1">1.7.-.-</ecNumber>
    </alternativeName>
    <alternativeName>
        <fullName evidence="1">Pseudoperoxidase MB</fullName>
        <ecNumber evidence="1">1.11.1.-</ecNumber>
    </alternativeName>
</protein>
<accession>P68279</accession>
<accession>P02172</accession>
<accession>P02175</accession>